<accession>Q25197</accession>
<feature type="signal peptide" evidence="2">
    <location>
        <begin position="1"/>
        <end position="24"/>
    </location>
</feature>
<feature type="chain" id="PRO_0000016714" description="Putative insulin-like peptide receptor">
    <location>
        <begin position="25"/>
        <end position="1477"/>
    </location>
</feature>
<feature type="topological domain" description="Extracellular" evidence="2">
    <location>
        <begin position="25"/>
        <end position="980"/>
    </location>
</feature>
<feature type="transmembrane region" description="Helical" evidence="2">
    <location>
        <begin position="981"/>
        <end position="1001"/>
    </location>
</feature>
<feature type="topological domain" description="Cytoplasmic" evidence="2">
    <location>
        <begin position="1002"/>
        <end position="1477"/>
    </location>
</feature>
<feature type="domain" description="Fibronectin type-III 1" evidence="4">
    <location>
        <begin position="652"/>
        <end position="750"/>
    </location>
</feature>
<feature type="domain" description="Fibronectin type-III 2" evidence="4">
    <location>
        <begin position="780"/>
        <end position="869"/>
    </location>
</feature>
<feature type="domain" description="Fibronectin type-III 3" evidence="4">
    <location>
        <begin position="880"/>
        <end position="971"/>
    </location>
</feature>
<feature type="domain" description="Protein kinase" evidence="3">
    <location>
        <begin position="1044"/>
        <end position="1315"/>
    </location>
</feature>
<feature type="region of interest" description="Disordered" evidence="6">
    <location>
        <begin position="1350"/>
        <end position="1376"/>
    </location>
</feature>
<feature type="region of interest" description="Disordered" evidence="6">
    <location>
        <begin position="1391"/>
        <end position="1421"/>
    </location>
</feature>
<feature type="compositionally biased region" description="Polar residues" evidence="6">
    <location>
        <begin position="1356"/>
        <end position="1368"/>
    </location>
</feature>
<feature type="compositionally biased region" description="Basic residues" evidence="6">
    <location>
        <begin position="1403"/>
        <end position="1412"/>
    </location>
</feature>
<feature type="active site" description="Proton acceptor" evidence="3 5">
    <location>
        <position position="1175"/>
    </location>
</feature>
<feature type="binding site" evidence="3">
    <location>
        <begin position="1050"/>
        <end position="1058"/>
    </location>
    <ligand>
        <name>ATP</name>
        <dbReference type="ChEBI" id="CHEBI:30616"/>
    </ligand>
</feature>
<feature type="binding site" evidence="3">
    <location>
        <position position="1077"/>
    </location>
    <ligand>
        <name>ATP</name>
        <dbReference type="ChEBI" id="CHEBI:30616"/>
    </ligand>
</feature>
<feature type="modified residue" description="Phosphotyrosine; by autocatalysis" evidence="1">
    <location>
        <position position="1201"/>
    </location>
</feature>
<feature type="glycosylation site" description="N-linked (GlcNAc...) asparagine" evidence="2">
    <location>
        <position position="55"/>
    </location>
</feature>
<feature type="glycosylation site" description="N-linked (GlcNAc...) asparagine" evidence="2">
    <location>
        <position position="255"/>
    </location>
</feature>
<feature type="glycosylation site" description="N-linked (GlcNAc...) asparagine" evidence="2">
    <location>
        <position position="300"/>
    </location>
</feature>
<feature type="glycosylation site" description="N-linked (GlcNAc...) asparagine" evidence="2">
    <location>
        <position position="325"/>
    </location>
</feature>
<feature type="glycosylation site" description="N-linked (GlcNAc...) asparagine" evidence="2">
    <location>
        <position position="457"/>
    </location>
</feature>
<feature type="glycosylation site" description="N-linked (GlcNAc...) asparagine" evidence="2">
    <location>
        <position position="491"/>
    </location>
</feature>
<feature type="glycosylation site" description="N-linked (GlcNAc...) asparagine" evidence="2">
    <location>
        <position position="549"/>
    </location>
</feature>
<feature type="glycosylation site" description="N-linked (GlcNAc...) asparagine" evidence="2">
    <location>
        <position position="644"/>
    </location>
</feature>
<feature type="glycosylation site" description="N-linked (GlcNAc...) asparagine" evidence="2">
    <location>
        <position position="732"/>
    </location>
</feature>
<feature type="glycosylation site" description="N-linked (GlcNAc...) asparagine" evidence="2">
    <location>
        <position position="791"/>
    </location>
</feature>
<feature type="glycosylation site" description="N-linked (GlcNAc...) asparagine" evidence="2">
    <location>
        <position position="874"/>
    </location>
</feature>
<feature type="glycosylation site" description="N-linked (GlcNAc...) asparagine" evidence="2">
    <location>
        <position position="895"/>
    </location>
</feature>
<feature type="glycosylation site" description="N-linked (GlcNAc...) asparagine" evidence="2">
    <location>
        <position position="957"/>
    </location>
</feature>
<gene>
    <name type="primary">HTK7</name>
</gene>
<dbReference type="EC" id="2.7.10.1"/>
<dbReference type="EMBL" id="M64612">
    <property type="protein sequence ID" value="AAA68205.1"/>
    <property type="molecule type" value="mRNA"/>
</dbReference>
<dbReference type="PIR" id="T18534">
    <property type="entry name" value="T18534"/>
</dbReference>
<dbReference type="RefSeq" id="NP_001296700.1">
    <property type="nucleotide sequence ID" value="NM_001309771.1"/>
</dbReference>
<dbReference type="SMR" id="Q25197"/>
<dbReference type="GlyCosmos" id="Q25197">
    <property type="glycosylation" value="13 sites, No reported glycans"/>
</dbReference>
<dbReference type="EnsemblMetazoa" id="NM_001309771.1">
    <property type="protein sequence ID" value="NP_001296700.1"/>
    <property type="gene ID" value="LOC100214733"/>
</dbReference>
<dbReference type="GeneID" id="100214733"/>
<dbReference type="KEGG" id="hmg:100214733"/>
<dbReference type="OrthoDB" id="5809444at2759"/>
<dbReference type="Proteomes" id="UP000694840">
    <property type="component" value="Unplaced"/>
</dbReference>
<dbReference type="GO" id="GO:0030424">
    <property type="term" value="C:axon"/>
    <property type="evidence" value="ECO:0007669"/>
    <property type="project" value="TreeGrafter"/>
</dbReference>
<dbReference type="GO" id="GO:0005899">
    <property type="term" value="C:insulin receptor complex"/>
    <property type="evidence" value="ECO:0007669"/>
    <property type="project" value="TreeGrafter"/>
</dbReference>
<dbReference type="GO" id="GO:0005524">
    <property type="term" value="F:ATP binding"/>
    <property type="evidence" value="ECO:0007669"/>
    <property type="project" value="UniProtKB-KW"/>
</dbReference>
<dbReference type="GO" id="GO:0005009">
    <property type="term" value="F:insulin receptor activity"/>
    <property type="evidence" value="ECO:0007669"/>
    <property type="project" value="TreeGrafter"/>
</dbReference>
<dbReference type="GO" id="GO:0043560">
    <property type="term" value="F:insulin receptor substrate binding"/>
    <property type="evidence" value="ECO:0007669"/>
    <property type="project" value="InterPro"/>
</dbReference>
<dbReference type="GO" id="GO:0046872">
    <property type="term" value="F:metal ion binding"/>
    <property type="evidence" value="ECO:0007669"/>
    <property type="project" value="UniProtKB-KW"/>
</dbReference>
<dbReference type="GO" id="GO:0043548">
    <property type="term" value="F:phosphatidylinositol 3-kinase binding"/>
    <property type="evidence" value="ECO:0007669"/>
    <property type="project" value="InterPro"/>
</dbReference>
<dbReference type="GO" id="GO:0042593">
    <property type="term" value="P:glucose homeostasis"/>
    <property type="evidence" value="ECO:0007669"/>
    <property type="project" value="TreeGrafter"/>
</dbReference>
<dbReference type="GO" id="GO:0043410">
    <property type="term" value="P:positive regulation of MAPK cascade"/>
    <property type="evidence" value="ECO:0007669"/>
    <property type="project" value="TreeGrafter"/>
</dbReference>
<dbReference type="GO" id="GO:0051897">
    <property type="term" value="P:positive regulation of phosphatidylinositol 3-kinase/protein kinase B signal transduction"/>
    <property type="evidence" value="ECO:0007669"/>
    <property type="project" value="TreeGrafter"/>
</dbReference>
<dbReference type="CDD" id="cd00063">
    <property type="entry name" value="FN3"/>
    <property type="match status" value="2"/>
</dbReference>
<dbReference type="CDD" id="cd00064">
    <property type="entry name" value="FU"/>
    <property type="match status" value="1"/>
</dbReference>
<dbReference type="CDD" id="cd05032">
    <property type="entry name" value="PTKc_InsR_like"/>
    <property type="match status" value="1"/>
</dbReference>
<dbReference type="FunFam" id="1.10.510.10:FF:001227">
    <property type="entry name" value="Tyrosine-protein kinase receptor"/>
    <property type="match status" value="1"/>
</dbReference>
<dbReference type="FunFam" id="3.30.200.20:FF:000026">
    <property type="entry name" value="Tyrosine-protein kinase receptor"/>
    <property type="match status" value="1"/>
</dbReference>
<dbReference type="Gene3D" id="2.10.220.10">
    <property type="entry name" value="Hormone Receptor, Insulin-like Growth Factor Receptor 1, Chain A, domain 2"/>
    <property type="match status" value="1"/>
</dbReference>
<dbReference type="Gene3D" id="2.60.40.10">
    <property type="entry name" value="Immunoglobulins"/>
    <property type="match status" value="3"/>
</dbReference>
<dbReference type="Gene3D" id="3.30.200.20">
    <property type="entry name" value="Phosphorylase Kinase, domain 1"/>
    <property type="match status" value="1"/>
</dbReference>
<dbReference type="Gene3D" id="3.80.20.20">
    <property type="entry name" value="Receptor L-domain"/>
    <property type="match status" value="2"/>
</dbReference>
<dbReference type="Gene3D" id="1.10.510.10">
    <property type="entry name" value="Transferase(Phosphotransferase) domain 1"/>
    <property type="match status" value="1"/>
</dbReference>
<dbReference type="InterPro" id="IPR003961">
    <property type="entry name" value="FN3_dom"/>
</dbReference>
<dbReference type="InterPro" id="IPR036116">
    <property type="entry name" value="FN3_sf"/>
</dbReference>
<dbReference type="InterPro" id="IPR006211">
    <property type="entry name" value="Furin-like_Cys-rich_dom"/>
</dbReference>
<dbReference type="InterPro" id="IPR006212">
    <property type="entry name" value="Furin_repeat"/>
</dbReference>
<dbReference type="InterPro" id="IPR009030">
    <property type="entry name" value="Growth_fac_rcpt_cys_sf"/>
</dbReference>
<dbReference type="InterPro" id="IPR013783">
    <property type="entry name" value="Ig-like_fold"/>
</dbReference>
<dbReference type="InterPro" id="IPR011009">
    <property type="entry name" value="Kinase-like_dom_sf"/>
</dbReference>
<dbReference type="InterPro" id="IPR000719">
    <property type="entry name" value="Prot_kinase_dom"/>
</dbReference>
<dbReference type="InterPro" id="IPR017441">
    <property type="entry name" value="Protein_kinase_ATP_BS"/>
</dbReference>
<dbReference type="InterPro" id="IPR000494">
    <property type="entry name" value="Rcpt_L-dom"/>
</dbReference>
<dbReference type="InterPro" id="IPR036941">
    <property type="entry name" value="Rcpt_L-dom_sf"/>
</dbReference>
<dbReference type="InterPro" id="IPR050122">
    <property type="entry name" value="RTK"/>
</dbReference>
<dbReference type="InterPro" id="IPR001245">
    <property type="entry name" value="Ser-Thr/Tyr_kinase_cat_dom"/>
</dbReference>
<dbReference type="InterPro" id="IPR008266">
    <property type="entry name" value="Tyr_kinase_AS"/>
</dbReference>
<dbReference type="InterPro" id="IPR016246">
    <property type="entry name" value="Tyr_kinase_insulin-like_rcpt"/>
</dbReference>
<dbReference type="InterPro" id="IPR002011">
    <property type="entry name" value="Tyr_kinase_rcpt_2_CS"/>
</dbReference>
<dbReference type="PANTHER" id="PTHR24416:SF525">
    <property type="entry name" value="INSULIN-LIKE RECEPTOR"/>
    <property type="match status" value="1"/>
</dbReference>
<dbReference type="PANTHER" id="PTHR24416">
    <property type="entry name" value="TYROSINE-PROTEIN KINASE RECEPTOR"/>
    <property type="match status" value="1"/>
</dbReference>
<dbReference type="Pfam" id="PF00757">
    <property type="entry name" value="Furin-like"/>
    <property type="match status" value="1"/>
</dbReference>
<dbReference type="Pfam" id="PF07714">
    <property type="entry name" value="PK_Tyr_Ser-Thr"/>
    <property type="match status" value="1"/>
</dbReference>
<dbReference type="Pfam" id="PF01030">
    <property type="entry name" value="Recep_L_domain"/>
    <property type="match status" value="2"/>
</dbReference>
<dbReference type="PIRSF" id="PIRSF000620">
    <property type="entry name" value="Insulin_receptor"/>
    <property type="match status" value="1"/>
</dbReference>
<dbReference type="PRINTS" id="PR00109">
    <property type="entry name" value="TYRKINASE"/>
</dbReference>
<dbReference type="SMART" id="SM00060">
    <property type="entry name" value="FN3"/>
    <property type="match status" value="3"/>
</dbReference>
<dbReference type="SMART" id="SM00261">
    <property type="entry name" value="FU"/>
    <property type="match status" value="1"/>
</dbReference>
<dbReference type="SUPFAM" id="SSF49265">
    <property type="entry name" value="Fibronectin type III"/>
    <property type="match status" value="2"/>
</dbReference>
<dbReference type="SUPFAM" id="SSF57184">
    <property type="entry name" value="Growth factor receptor domain"/>
    <property type="match status" value="1"/>
</dbReference>
<dbReference type="SUPFAM" id="SSF52058">
    <property type="entry name" value="L domain-like"/>
    <property type="match status" value="2"/>
</dbReference>
<dbReference type="SUPFAM" id="SSF56112">
    <property type="entry name" value="Protein kinase-like (PK-like)"/>
    <property type="match status" value="1"/>
</dbReference>
<dbReference type="PROSITE" id="PS50853">
    <property type="entry name" value="FN3"/>
    <property type="match status" value="3"/>
</dbReference>
<dbReference type="PROSITE" id="PS00107">
    <property type="entry name" value="PROTEIN_KINASE_ATP"/>
    <property type="match status" value="1"/>
</dbReference>
<dbReference type="PROSITE" id="PS50011">
    <property type="entry name" value="PROTEIN_KINASE_DOM"/>
    <property type="match status" value="1"/>
</dbReference>
<dbReference type="PROSITE" id="PS00109">
    <property type="entry name" value="PROTEIN_KINASE_TYR"/>
    <property type="match status" value="1"/>
</dbReference>
<dbReference type="PROSITE" id="PS00239">
    <property type="entry name" value="RECEPTOR_TYR_KIN_II"/>
    <property type="match status" value="1"/>
</dbReference>
<sequence length="1477" mass="168278">MMRNVQSFYFLFLLIVLNFHVVLSAVCIGQRATTTIWLNQNGDCQDVGFCQYLQNCTCWHGNLVVKSTKYYDEENFKPYFPKLREITGYLLISLCTLKFFHLFPGLTVIRGGDLILNYALVIYYNEIKEVYFPSLTAILNGGVHIGRNHRLCYVNTIRWKSIIKDIHQTGQYGIYLESNKLNCDLGCLKGHCHPAPGHDGDPKAQYCWGPGPKKQQNKAQCQRFCNTQCGPEGCLDGSDHICCHHECLGGCSAINSTNTCHACRKYRIKSTGQCVSKCPRKQYLVDKFLCQESCPYWSINSTEYHHYLWQGECVTKCPVNYISNNQTKKCEKCKSGMKCNTVCKYQDVMADGTLYNGALIRVPSDISKKGLVGCSVFEGSLTFQLQEGTGKAEDSLNELKSLKVLKGHLKIQKSSLKSLNFLSSLEVIETPQNALLHNKYVMAVYENSQLSELWPGNESIIVSDGGIFFQYNPRLCPLHIRNLQDRIHYKNGSKVTGEVSLQNNGHKVLCDTQMLVMHVEEFIPPDLNMETDMTAIECNSFKCVKVTWNFTMTSAYNNILFYAIYFKELQSNQEAVVQLDNECQNNDDWNVITVDIPKIESLEQSLFLQSKIISKLTPYTRYAFYIKEIVSKGEERSSHIHYINISQDLPSEPLGVEASFLSENKILLKWRAPSKPNGIITAFKIYYNKPDYSFWEEQKVLDWCSRDASRDKNAKDVAGYPVNKENYNQYCNISCVCDEEKENSKAIKADREAHNFNVEFQTELMRVLFTKNKFSYRNKNKSPPKIDFSKNISLILSNKILTSTSTTVTQAKIEIIEEPKVTVNGNIFSYVISGLDYFEDYELKVCGCTVVGCRRPSSTINLDCGIVQARTGVNLTADNLDSKMVRVQVQLDSYNISWIAPHKPNAVILKYEISIRYALDKDALVICRPGYLPTYIIRKSRFGNYVAKIRAISPAGNGSWTEEIHFKVAELSVTKNNNQLIIGIISAVSAVIVALLVFILLYMFLHRKLEKDVQGVLYASVNPEYMNSKEVYIPDEWELNREKIELIRELGQGSFGMVFEGIAHGIGDHAELRVAVKTTNENASIHDRIQILQEASIMKAFNCNHVVKLIGVVSQGQPTFVVMELMGRGDLKSYLKERRPDDGGIPLMRQEIYQMVAEIADGMAYLAARKFVHCDLAARNCMVASDFTVKIGDFGMARDIYERNYYRKDGKSLLPIRWMAPESLKDGIFSTASDVWSFGVVLWEICTLASQPYQGKTNEQVLNFVLSNGHLDYPEGCDYQLREFMSLCWHRDPKMRPSFLEIVHVLENEVDDDFVMVSFYHEMKRKALEDIYMKSESYIKSDAYTMSDGYTKGDGNMQNMLSRSQNRKSAIEKSKERLSISSLDSGTYVEKYDANDTPEEIPKKKKRPRSKRNSAVDSNACETKPMLRVESLYDNHDAFSENMQYGDTPVGKSDLMHPETNRELRLSEIFYGKPIPV</sequence>
<organism>
    <name type="scientific">Hydra vulgaris</name>
    <name type="common">Hydra</name>
    <name type="synonym">Hydra attenuata</name>
    <dbReference type="NCBI Taxonomy" id="6087"/>
    <lineage>
        <taxon>Eukaryota</taxon>
        <taxon>Metazoa</taxon>
        <taxon>Cnidaria</taxon>
        <taxon>Hydrozoa</taxon>
        <taxon>Hydroidolina</taxon>
        <taxon>Anthoathecata</taxon>
        <taxon>Aplanulata</taxon>
        <taxon>Hydridae</taxon>
        <taxon>Hydra</taxon>
    </lineage>
</organism>
<name>HTK7_HYDVU</name>
<evidence type="ECO:0000250" key="1"/>
<evidence type="ECO:0000255" key="2"/>
<evidence type="ECO:0000255" key="3">
    <source>
        <dbReference type="PROSITE-ProRule" id="PRU00159"/>
    </source>
</evidence>
<evidence type="ECO:0000255" key="4">
    <source>
        <dbReference type="PROSITE-ProRule" id="PRU00316"/>
    </source>
</evidence>
<evidence type="ECO:0000255" key="5">
    <source>
        <dbReference type="PROSITE-ProRule" id="PRU10028"/>
    </source>
</evidence>
<evidence type="ECO:0000256" key="6">
    <source>
        <dbReference type="SAM" id="MobiDB-lite"/>
    </source>
</evidence>
<keyword id="KW-0067">ATP-binding</keyword>
<keyword id="KW-0325">Glycoprotein</keyword>
<keyword id="KW-0418">Kinase</keyword>
<keyword id="KW-0464">Manganese</keyword>
<keyword id="KW-0472">Membrane</keyword>
<keyword id="KW-0479">Metal-binding</keyword>
<keyword id="KW-0547">Nucleotide-binding</keyword>
<keyword id="KW-0597">Phosphoprotein</keyword>
<keyword id="KW-0675">Receptor</keyword>
<keyword id="KW-1185">Reference proteome</keyword>
<keyword id="KW-0677">Repeat</keyword>
<keyword id="KW-0732">Signal</keyword>
<keyword id="KW-0808">Transferase</keyword>
<keyword id="KW-0812">Transmembrane</keyword>
<keyword id="KW-1133">Transmembrane helix</keyword>
<keyword id="KW-0829">Tyrosine-protein kinase</keyword>
<proteinExistence type="evidence at transcript level"/>
<comment type="function">
    <text evidence="1">This receptor probably binds an insulin related protein and has a tyrosine-protein kinase activity.</text>
</comment>
<comment type="catalytic activity">
    <reaction evidence="5">
        <text>L-tyrosyl-[protein] + ATP = O-phospho-L-tyrosyl-[protein] + ADP + H(+)</text>
        <dbReference type="Rhea" id="RHEA:10596"/>
        <dbReference type="Rhea" id="RHEA-COMP:10136"/>
        <dbReference type="Rhea" id="RHEA-COMP:20101"/>
        <dbReference type="ChEBI" id="CHEBI:15378"/>
        <dbReference type="ChEBI" id="CHEBI:30616"/>
        <dbReference type="ChEBI" id="CHEBI:46858"/>
        <dbReference type="ChEBI" id="CHEBI:61978"/>
        <dbReference type="ChEBI" id="CHEBI:456216"/>
        <dbReference type="EC" id="2.7.10.1"/>
    </reaction>
</comment>
<comment type="cofactor">
    <cofactor evidence="1">
        <name>Mn(2+)</name>
        <dbReference type="ChEBI" id="CHEBI:29035"/>
    </cofactor>
</comment>
<comment type="subcellular location">
    <subcellularLocation>
        <location evidence="1">Membrane</location>
        <topology evidence="1">Single-pass type I membrane protein</topology>
    </subcellularLocation>
</comment>
<comment type="tissue specificity">
    <text>Expressed in dividing epithelial cells.</text>
</comment>
<comment type="similarity">
    <text evidence="3">Belongs to the protein kinase superfamily. Tyr protein kinase family. Insulin receptor subfamily.</text>
</comment>
<protein>
    <recommendedName>
        <fullName>Putative insulin-like peptide receptor</fullName>
        <ecNumber>2.7.10.1</ecNumber>
    </recommendedName>
</protein>
<reference key="1">
    <citation type="submission" date="1991-04" db="EMBL/GenBank/DDBJ databases">
        <authorList>
            <person name="Steele R.E."/>
            <person name="Mai N.H."/>
            <person name="Lieu P."/>
            <person name="Shenk M.A."/>
        </authorList>
    </citation>
    <scope>NUCLEOTIDE SEQUENCE [MRNA]</scope>
</reference>